<protein>
    <recommendedName>
        <fullName evidence="1">Imidazole glycerol phosphate synthase subunit HisF</fullName>
        <ecNumber evidence="1">4.3.2.10</ecNumber>
    </recommendedName>
    <alternativeName>
        <fullName evidence="1">IGP synthase cyclase subunit</fullName>
    </alternativeName>
    <alternativeName>
        <fullName evidence="1">IGP synthase subunit HisF</fullName>
    </alternativeName>
    <alternativeName>
        <fullName evidence="1">ImGP synthase subunit HisF</fullName>
        <shortName evidence="1">IGPS subunit HisF</shortName>
    </alternativeName>
</protein>
<evidence type="ECO:0000255" key="1">
    <source>
        <dbReference type="HAMAP-Rule" id="MF_01013"/>
    </source>
</evidence>
<gene>
    <name evidence="1" type="primary">hisF</name>
    <name type="ordered locus">MW2592</name>
</gene>
<proteinExistence type="inferred from homology"/>
<sequence>MIKKRIIPCLDVKDGRVVKGIQFKGLRDIGNPVDLAMYYNEAGADELVFLDISKTEEGHSLMLEVIEQTASRLFIPLTVGGGIQSLDDITQLLNHGADKVSLNSSALKNPQLIKQASDKFGRQCICIAIDSYYDPERKAHYCCTTGGKKMTNIKVYDWVQQVEQLGAGELLVTSMGHDGMKQGFDIEHLANIKSLVNIPIIASGGGGNAQHFVELFDQTDVSAGLAASILHDRETTVQSIKEVIRQGGIAVR</sequence>
<accession>Q8NUI3</accession>
<name>HIS6_STAAW</name>
<feature type="chain" id="PRO_0000142236" description="Imidazole glycerol phosphate synthase subunit HisF">
    <location>
        <begin position="1"/>
        <end position="252"/>
    </location>
</feature>
<feature type="active site" evidence="1">
    <location>
        <position position="11"/>
    </location>
</feature>
<feature type="active site" evidence="1">
    <location>
        <position position="130"/>
    </location>
</feature>
<organism>
    <name type="scientific">Staphylococcus aureus (strain MW2)</name>
    <dbReference type="NCBI Taxonomy" id="196620"/>
    <lineage>
        <taxon>Bacteria</taxon>
        <taxon>Bacillati</taxon>
        <taxon>Bacillota</taxon>
        <taxon>Bacilli</taxon>
        <taxon>Bacillales</taxon>
        <taxon>Staphylococcaceae</taxon>
        <taxon>Staphylococcus</taxon>
    </lineage>
</organism>
<reference key="1">
    <citation type="journal article" date="2002" name="Lancet">
        <title>Genome and virulence determinants of high virulence community-acquired MRSA.</title>
        <authorList>
            <person name="Baba T."/>
            <person name="Takeuchi F."/>
            <person name="Kuroda M."/>
            <person name="Yuzawa H."/>
            <person name="Aoki K."/>
            <person name="Oguchi A."/>
            <person name="Nagai Y."/>
            <person name="Iwama N."/>
            <person name="Asano K."/>
            <person name="Naimi T."/>
            <person name="Kuroda H."/>
            <person name="Cui L."/>
            <person name="Yamamoto K."/>
            <person name="Hiramatsu K."/>
        </authorList>
    </citation>
    <scope>NUCLEOTIDE SEQUENCE [LARGE SCALE GENOMIC DNA]</scope>
    <source>
        <strain>MW2</strain>
    </source>
</reference>
<dbReference type="EC" id="4.3.2.10" evidence="1"/>
<dbReference type="EMBL" id="BA000033">
    <property type="protein sequence ID" value="BAB96457.1"/>
    <property type="molecule type" value="Genomic_DNA"/>
</dbReference>
<dbReference type="SMR" id="Q8NUI3"/>
<dbReference type="KEGG" id="sam:MW2592"/>
<dbReference type="HOGENOM" id="CLU_048577_4_0_9"/>
<dbReference type="UniPathway" id="UPA00031">
    <property type="reaction ID" value="UER00010"/>
</dbReference>
<dbReference type="GO" id="GO:0005737">
    <property type="term" value="C:cytoplasm"/>
    <property type="evidence" value="ECO:0007669"/>
    <property type="project" value="UniProtKB-SubCell"/>
</dbReference>
<dbReference type="GO" id="GO:0000107">
    <property type="term" value="F:imidazoleglycerol-phosphate synthase activity"/>
    <property type="evidence" value="ECO:0007669"/>
    <property type="project" value="UniProtKB-UniRule"/>
</dbReference>
<dbReference type="GO" id="GO:0016829">
    <property type="term" value="F:lyase activity"/>
    <property type="evidence" value="ECO:0007669"/>
    <property type="project" value="UniProtKB-KW"/>
</dbReference>
<dbReference type="GO" id="GO:0000105">
    <property type="term" value="P:L-histidine biosynthetic process"/>
    <property type="evidence" value="ECO:0007669"/>
    <property type="project" value="UniProtKB-UniRule"/>
</dbReference>
<dbReference type="CDD" id="cd04731">
    <property type="entry name" value="HisF"/>
    <property type="match status" value="1"/>
</dbReference>
<dbReference type="FunFam" id="3.20.20.70:FF:000462">
    <property type="entry name" value="Multifunctional fusion protein"/>
    <property type="match status" value="1"/>
</dbReference>
<dbReference type="Gene3D" id="3.20.20.70">
    <property type="entry name" value="Aldolase class I"/>
    <property type="match status" value="1"/>
</dbReference>
<dbReference type="HAMAP" id="MF_01013">
    <property type="entry name" value="HisF"/>
    <property type="match status" value="1"/>
</dbReference>
<dbReference type="InterPro" id="IPR013785">
    <property type="entry name" value="Aldolase_TIM"/>
</dbReference>
<dbReference type="InterPro" id="IPR006062">
    <property type="entry name" value="His_biosynth"/>
</dbReference>
<dbReference type="InterPro" id="IPR004651">
    <property type="entry name" value="HisF"/>
</dbReference>
<dbReference type="InterPro" id="IPR050064">
    <property type="entry name" value="IGPS_HisA/HisF"/>
</dbReference>
<dbReference type="InterPro" id="IPR011060">
    <property type="entry name" value="RibuloseP-bd_barrel"/>
</dbReference>
<dbReference type="NCBIfam" id="TIGR00735">
    <property type="entry name" value="hisF"/>
    <property type="match status" value="1"/>
</dbReference>
<dbReference type="PANTHER" id="PTHR21235:SF2">
    <property type="entry name" value="IMIDAZOLE GLYCEROL PHOSPHATE SYNTHASE HISHF"/>
    <property type="match status" value="1"/>
</dbReference>
<dbReference type="PANTHER" id="PTHR21235">
    <property type="entry name" value="IMIDAZOLE GLYCEROL PHOSPHATE SYNTHASE SUBUNIT HISF/H IGP SYNTHASE SUBUNIT HISF/H"/>
    <property type="match status" value="1"/>
</dbReference>
<dbReference type="Pfam" id="PF00977">
    <property type="entry name" value="His_biosynth"/>
    <property type="match status" value="1"/>
</dbReference>
<dbReference type="SUPFAM" id="SSF51366">
    <property type="entry name" value="Ribulose-phoshate binding barrel"/>
    <property type="match status" value="1"/>
</dbReference>
<keyword id="KW-0028">Amino-acid biosynthesis</keyword>
<keyword id="KW-0963">Cytoplasm</keyword>
<keyword id="KW-0368">Histidine biosynthesis</keyword>
<keyword id="KW-0456">Lyase</keyword>
<comment type="function">
    <text evidence="1">IGPS catalyzes the conversion of PRFAR and glutamine to IGP, AICAR and glutamate. The HisF subunit catalyzes the cyclization activity that produces IGP and AICAR from PRFAR using the ammonia provided by the HisH subunit.</text>
</comment>
<comment type="catalytic activity">
    <reaction evidence="1">
        <text>5-[(5-phospho-1-deoxy-D-ribulos-1-ylimino)methylamino]-1-(5-phospho-beta-D-ribosyl)imidazole-4-carboxamide + L-glutamine = D-erythro-1-(imidazol-4-yl)glycerol 3-phosphate + 5-amino-1-(5-phospho-beta-D-ribosyl)imidazole-4-carboxamide + L-glutamate + H(+)</text>
        <dbReference type="Rhea" id="RHEA:24793"/>
        <dbReference type="ChEBI" id="CHEBI:15378"/>
        <dbReference type="ChEBI" id="CHEBI:29985"/>
        <dbReference type="ChEBI" id="CHEBI:58278"/>
        <dbReference type="ChEBI" id="CHEBI:58359"/>
        <dbReference type="ChEBI" id="CHEBI:58475"/>
        <dbReference type="ChEBI" id="CHEBI:58525"/>
        <dbReference type="EC" id="4.3.2.10"/>
    </reaction>
</comment>
<comment type="pathway">
    <text evidence="1">Amino-acid biosynthesis; L-histidine biosynthesis; L-histidine from 5-phospho-alpha-D-ribose 1-diphosphate: step 5/9.</text>
</comment>
<comment type="subunit">
    <text evidence="1">Heterodimer of HisH and HisF.</text>
</comment>
<comment type="subcellular location">
    <subcellularLocation>
        <location evidence="1">Cytoplasm</location>
    </subcellularLocation>
</comment>
<comment type="similarity">
    <text evidence="1">Belongs to the HisA/HisF family.</text>
</comment>